<organism>
    <name type="scientific">Saccharomyces cerevisiae (strain ATCC 204508 / S288c)</name>
    <name type="common">Baker's yeast</name>
    <dbReference type="NCBI Taxonomy" id="559292"/>
    <lineage>
        <taxon>Eukaryota</taxon>
        <taxon>Fungi</taxon>
        <taxon>Dikarya</taxon>
        <taxon>Ascomycota</taxon>
        <taxon>Saccharomycotina</taxon>
        <taxon>Saccharomycetes</taxon>
        <taxon>Saccharomycetales</taxon>
        <taxon>Saccharomycetaceae</taxon>
        <taxon>Saccharomyces</taxon>
    </lineage>
</organism>
<protein>
    <recommendedName>
        <fullName>Pre-mRNA-splicing factor CLF1</fullName>
    </recommendedName>
    <alternativeName>
        <fullName>Crooked neck-like factor 1</fullName>
    </alternativeName>
    <alternativeName>
        <fullName>PRP19-associated complex protein 77</fullName>
    </alternativeName>
    <alternativeName>
        <fullName>Synthetic lethal with CDC40 protein 3</fullName>
    </alternativeName>
</protein>
<comment type="function">
    <text evidence="1 2 3 6 8">Involved in pre-mRNA splicing and cell cycle progression. Required for the spliceosome assembly by promoting the functional integration of the U4/U6.U5 tri-snRNP particle into the U1-, U2-dependent pre-spliceosome. Also recruits PRP19 to the spliceosome, as a component of the NTC complex (or PRP19-associated complex). The association of the NTC complex to the spliceosome mediates conformational rearrangement or stabilizes the structure of the spliceosome after U4 snRNA dissociation, which leads to spliceosome maturation. Required for initiation of the DNA replication by binding the RNA replication origins, probably through its interaction with the origin recognition complex (ORC).</text>
</comment>
<comment type="subunit">
    <text evidence="1 2 3 4 5 6 7 8">Belongs to the NTC complex (or PRP19-associated complex), composed of at least CEF1, CLF1, ISY1, NTC20, SNT309, SYF1, SYF2, and PRP19. The NTC complex associates with the spliceosome after the release of the U1 and U4 snRNAs and forms the CWC spliceosome subcomplex (or CEF1-associated complex) reminiscent of a late-stage spliceosome composed also of the U2, U5 and U6 snRNAs and at least BUD13, BUD31, BRR2, CDC40, CUS1, CWC2, CWC15, CWC21, CWC22, CWC23, CWC24, CWC25, CWC27, ECM2, HSH155, IST3, LEA1, MSL1, PRP8, PRP9, PRP11, PRP21, PRP22, PRP45, PRP46, SLU7, SMB1, SMD1, SMD2, SMD3, SMX2, SMX3, SNU114, SPP2, RSE1 and YJU2. Interacts with CEF1, ISY1, MUD2, NTC20, PRP22, PRP40, PRP46, SYF1, SYF2, and the ORC2 subunit of the origin recognition complex.</text>
</comment>
<comment type="interaction">
    <interactant intactId="EBI-484">
        <id>Q12309</id>
    </interactant>
    <interactant intactId="EBI-476">
        <id>Q03654</id>
        <label>CEF1</label>
    </interactant>
    <organismsDiffer>false</organismsDiffer>
    <experiments>9</experiments>
</comment>
<comment type="interaction">
    <interactant intactId="EBI-484">
        <id>Q12309</id>
    </interactant>
    <interactant intactId="EBI-9382">
        <id>P21374</id>
        <label>ISY1</label>
    </interactant>
    <organismsDiffer>false</organismsDiffer>
    <experiments>5</experiments>
</comment>
<comment type="interaction">
    <interactant intactId="EBI-484">
        <id>Q12309</id>
    </interactant>
    <interactant intactId="EBI-20921">
        <id>P38302</id>
        <label>NTC20</label>
    </interactant>
    <organismsDiffer>false</organismsDiffer>
    <experiments>7</experiments>
</comment>
<comment type="interaction">
    <interactant intactId="EBI-484">
        <id>Q12309</id>
    </interactant>
    <interactant intactId="EBI-493">
        <id>P32523</id>
        <label>PRP19</label>
    </interactant>
    <organismsDiffer>false</organismsDiffer>
    <experiments>10</experiments>
</comment>
<comment type="interaction">
    <interactant intactId="EBI-484">
        <id>Q12309</id>
    </interactant>
    <interactant intactId="EBI-818">
        <id>Q06091</id>
        <label>SNT309</label>
    </interactant>
    <organismsDiffer>false</organismsDiffer>
    <experiments>5</experiments>
</comment>
<comment type="interaction">
    <interactant intactId="EBI-484">
        <id>Q12309</id>
    </interactant>
    <interactant intactId="EBI-540">
        <id>Q04048</id>
        <label>SYF1</label>
    </interactant>
    <organismsDiffer>false</organismsDiffer>
    <experiments>5</experiments>
</comment>
<comment type="interaction">
    <interactant intactId="EBI-484">
        <id>Q12309</id>
    </interactant>
    <interactant intactId="EBI-23308">
        <id>P53277</id>
        <label>SYF2</label>
    </interactant>
    <organismsDiffer>false</organismsDiffer>
    <experiments>3</experiments>
</comment>
<comment type="subcellular location">
    <subcellularLocation>
        <location evidence="9">Nucleus</location>
    </subcellularLocation>
</comment>
<comment type="miscellaneous">
    <text evidence="10">Present with 2140 molecules/cell in log phase SD medium.</text>
</comment>
<comment type="similarity">
    <text evidence="11">Belongs to the crooked-neck family.</text>
</comment>
<sequence>MDTLEPTAVDTHVSAEQILRDVYKKGQKARGSTNIDILDLEELREYQRRKRTEYEGYLKRNRLDMGQWIRYAQFEIEQHDMRRARSIFERALLVDSSFIPLWIRYIDAELKVKCINHARNLMNRAISTLPRVDKLWYKYLIVEESLNNVEIVRSLYTKWCSLEPGVNAWNSFVDFEIRQKNWNGVREIYSKYVMAHPQMQTWLKWVRFENRHGNTEFTRSVYSLAIDTVANLQNLQIWSDMEVAKLVNSFAHWEAAQQEYERSSALYQIAIEKWPSNQLLKAGLLDFEKQFGDINSIEETISYKRKMEYETILSNNAYDYDTWWLYLDLISESFPKQIMQTFEKAIVDSRPKELSKNVQWKRYIYLWMRYICYVELELENSLLEEELFQRLIDDIIPHKHFTFSKIWLMYAKFLIRHDDVPKARKILGKAIGLCPKAKTFKGYIELEVKLKEFDRVRKIYEKFIEFQPSDLQIWSQYGELEENLGDWDRVRGIYTIALDENSDFLTKEAKIVLLQKYITFETESQEFEKARKLYRRYLELNQYSPQSWIEFAMYQTSTPTEQQLLDLAKLQSENVDEDIEFEITDENKLEARKVFEEAIVFFKEKDDKQGRLSILEALKDYEETYGTELDQETVKKRFPKVIKKVRLQNGVEEEFVDYIFPDDIDDDKPKPSKFLELAKKWKQEQAL</sequence>
<evidence type="ECO:0000269" key="1">
    <source>
    </source>
</evidence>
<evidence type="ECO:0000269" key="2">
    <source>
    </source>
</evidence>
<evidence type="ECO:0000269" key="3">
    <source>
    </source>
</evidence>
<evidence type="ECO:0000269" key="4">
    <source>
    </source>
</evidence>
<evidence type="ECO:0000269" key="5">
    <source>
    </source>
</evidence>
<evidence type="ECO:0000269" key="6">
    <source>
    </source>
</evidence>
<evidence type="ECO:0000269" key="7">
    <source>
    </source>
</evidence>
<evidence type="ECO:0000269" key="8">
    <source>
    </source>
</evidence>
<evidence type="ECO:0000269" key="9">
    <source>
    </source>
</evidence>
<evidence type="ECO:0000269" key="10">
    <source>
    </source>
</evidence>
<evidence type="ECO:0000305" key="11"/>
<evidence type="ECO:0007829" key="12">
    <source>
        <dbReference type="PDB" id="5Y88"/>
    </source>
</evidence>
<evidence type="ECO:0007829" key="13">
    <source>
        <dbReference type="PDB" id="9DTR"/>
    </source>
</evidence>
<gene>
    <name type="primary">CLF1</name>
    <name type="synonym">NTC77</name>
    <name type="synonym">SYF3</name>
    <name type="ordered locus">YLR117C</name>
    <name type="ORF">L2952</name>
</gene>
<accession>Q12309</accession>
<accession>D6VYB5</accession>
<dbReference type="EMBL" id="X89514">
    <property type="protein sequence ID" value="CAA61696.1"/>
    <property type="molecule type" value="Genomic_DNA"/>
</dbReference>
<dbReference type="EMBL" id="U53877">
    <property type="protein sequence ID" value="AAB82364.1"/>
    <property type="molecule type" value="Genomic_DNA"/>
</dbReference>
<dbReference type="EMBL" id="Z73289">
    <property type="protein sequence ID" value="CAA97685.1"/>
    <property type="molecule type" value="Genomic_DNA"/>
</dbReference>
<dbReference type="EMBL" id="BK006945">
    <property type="protein sequence ID" value="DAA09431.1"/>
    <property type="molecule type" value="Genomic_DNA"/>
</dbReference>
<dbReference type="PIR" id="S64954">
    <property type="entry name" value="S64954"/>
</dbReference>
<dbReference type="RefSeq" id="NP_013218.1">
    <property type="nucleotide sequence ID" value="NM_001182004.1"/>
</dbReference>
<dbReference type="PDB" id="5GM6">
    <property type="method" value="EM"/>
    <property type="resolution" value="3.50 A"/>
    <property type="chains" value="d=1-275"/>
</dbReference>
<dbReference type="PDB" id="5GMK">
    <property type="method" value="EM"/>
    <property type="resolution" value="3.40 A"/>
    <property type="chains" value="d=1-275"/>
</dbReference>
<dbReference type="PDB" id="5LJ3">
    <property type="method" value="EM"/>
    <property type="resolution" value="3.80 A"/>
    <property type="chains" value="S=1-687"/>
</dbReference>
<dbReference type="PDB" id="5LJ5">
    <property type="method" value="EM"/>
    <property type="resolution" value="3.80 A"/>
    <property type="chains" value="S=1-687"/>
</dbReference>
<dbReference type="PDB" id="5LQW">
    <property type="method" value="EM"/>
    <property type="resolution" value="5.80 A"/>
    <property type="chains" value="R=1-687"/>
</dbReference>
<dbReference type="PDB" id="5MPS">
    <property type="method" value="EM"/>
    <property type="resolution" value="3.85 A"/>
    <property type="chains" value="S=1-687"/>
</dbReference>
<dbReference type="PDB" id="5MQ0">
    <property type="method" value="EM"/>
    <property type="resolution" value="4.17 A"/>
    <property type="chains" value="S=1-687"/>
</dbReference>
<dbReference type="PDB" id="5WSG">
    <property type="method" value="EM"/>
    <property type="resolution" value="4.00 A"/>
    <property type="chains" value="d=36-275"/>
</dbReference>
<dbReference type="PDB" id="5Y88">
    <property type="method" value="EM"/>
    <property type="resolution" value="3.70 A"/>
    <property type="chains" value="I=1-687"/>
</dbReference>
<dbReference type="PDB" id="5YLZ">
    <property type="method" value="EM"/>
    <property type="resolution" value="3.60 A"/>
    <property type="chains" value="I=1-687"/>
</dbReference>
<dbReference type="PDB" id="6BK8">
    <property type="method" value="EM"/>
    <property type="resolution" value="3.30 A"/>
    <property type="chains" value="T=1-687"/>
</dbReference>
<dbReference type="PDB" id="6EXN">
    <property type="method" value="EM"/>
    <property type="resolution" value="3.70 A"/>
    <property type="chains" value="S=1-687"/>
</dbReference>
<dbReference type="PDB" id="6J6G">
    <property type="method" value="EM"/>
    <property type="resolution" value="3.20 A"/>
    <property type="chains" value="d=1-687"/>
</dbReference>
<dbReference type="PDB" id="6J6H">
    <property type="method" value="EM"/>
    <property type="resolution" value="3.60 A"/>
    <property type="chains" value="d=1-687"/>
</dbReference>
<dbReference type="PDB" id="6J6N">
    <property type="method" value="EM"/>
    <property type="resolution" value="3.86 A"/>
    <property type="chains" value="d=1-687"/>
</dbReference>
<dbReference type="PDB" id="6J6Q">
    <property type="method" value="EM"/>
    <property type="resolution" value="3.70 A"/>
    <property type="chains" value="d=1-687"/>
</dbReference>
<dbReference type="PDB" id="9DTR">
    <property type="method" value="EM"/>
    <property type="resolution" value="2.31 A"/>
    <property type="chains" value="S=1-687"/>
</dbReference>
<dbReference type="PDBsum" id="5GM6"/>
<dbReference type="PDBsum" id="5GMK"/>
<dbReference type="PDBsum" id="5LJ3"/>
<dbReference type="PDBsum" id="5LJ5"/>
<dbReference type="PDBsum" id="5LQW"/>
<dbReference type="PDBsum" id="5MPS"/>
<dbReference type="PDBsum" id="5MQ0"/>
<dbReference type="PDBsum" id="5WSG"/>
<dbReference type="PDBsum" id="5Y88"/>
<dbReference type="PDBsum" id="5YLZ"/>
<dbReference type="PDBsum" id="6BK8"/>
<dbReference type="PDBsum" id="6EXN"/>
<dbReference type="PDBsum" id="6J6G"/>
<dbReference type="PDBsum" id="6J6H"/>
<dbReference type="PDBsum" id="6J6N"/>
<dbReference type="PDBsum" id="6J6Q"/>
<dbReference type="PDBsum" id="9DTR"/>
<dbReference type="EMDB" id="EMD-0686"/>
<dbReference type="EMDB" id="EMD-0687"/>
<dbReference type="EMDB" id="EMD-0691"/>
<dbReference type="EMDB" id="EMD-0692"/>
<dbReference type="EMDB" id="EMD-3539"/>
<dbReference type="EMDB" id="EMD-3541"/>
<dbReference type="EMDB" id="EMD-4057"/>
<dbReference type="EMDB" id="EMD-47157"/>
<dbReference type="EMDB" id="EMD-6817"/>
<dbReference type="EMDB" id="EMD-6839"/>
<dbReference type="EMDB" id="EMD-7109"/>
<dbReference type="EMDB" id="EMD-9524"/>
<dbReference type="EMDB" id="EMD-9525"/>
<dbReference type="SMR" id="Q12309"/>
<dbReference type="BioGRID" id="31389">
    <property type="interactions" value="291"/>
</dbReference>
<dbReference type="ComplexPortal" id="CPX-1651">
    <property type="entry name" value="PRP19-associated complex"/>
</dbReference>
<dbReference type="ComplexPortal" id="CPX-1885">
    <property type="entry name" value="NineTeen complex"/>
</dbReference>
<dbReference type="DIP" id="DIP-1685N"/>
<dbReference type="FunCoup" id="Q12309">
    <property type="interactions" value="1269"/>
</dbReference>
<dbReference type="IntAct" id="Q12309">
    <property type="interactions" value="58"/>
</dbReference>
<dbReference type="MINT" id="Q12309"/>
<dbReference type="STRING" id="4932.YLR117C"/>
<dbReference type="MoonProt" id="Q12309"/>
<dbReference type="iPTMnet" id="Q12309"/>
<dbReference type="PaxDb" id="4932-YLR117C"/>
<dbReference type="PeptideAtlas" id="Q12309"/>
<dbReference type="EnsemblFungi" id="YLR117C_mRNA">
    <property type="protein sequence ID" value="YLR117C"/>
    <property type="gene ID" value="YLR117C"/>
</dbReference>
<dbReference type="GeneID" id="850808"/>
<dbReference type="KEGG" id="sce:YLR117C"/>
<dbReference type="AGR" id="SGD:S000004107"/>
<dbReference type="SGD" id="S000004107">
    <property type="gene designation" value="CLF1"/>
</dbReference>
<dbReference type="VEuPathDB" id="FungiDB:YLR117C"/>
<dbReference type="eggNOG" id="KOG1915">
    <property type="taxonomic scope" value="Eukaryota"/>
</dbReference>
<dbReference type="GeneTree" id="ENSGT00550000074931"/>
<dbReference type="HOGENOM" id="CLU_011554_1_0_1"/>
<dbReference type="InParanoid" id="Q12309"/>
<dbReference type="OMA" id="HIKVWIS"/>
<dbReference type="OrthoDB" id="541719at2759"/>
<dbReference type="BioCyc" id="YEAST:G3O-32262-MONOMER"/>
<dbReference type="BioGRID-ORCS" id="850808">
    <property type="hits" value="0 hits in 10 CRISPR screens"/>
</dbReference>
<dbReference type="PRO" id="PR:Q12309"/>
<dbReference type="Proteomes" id="UP000002311">
    <property type="component" value="Chromosome XII"/>
</dbReference>
<dbReference type="RNAct" id="Q12309">
    <property type="molecule type" value="protein"/>
</dbReference>
<dbReference type="GO" id="GO:0000785">
    <property type="term" value="C:chromatin"/>
    <property type="evidence" value="ECO:0000314"/>
    <property type="project" value="SGD"/>
</dbReference>
<dbReference type="GO" id="GO:0071014">
    <property type="term" value="C:post-mRNA release spliceosomal complex"/>
    <property type="evidence" value="ECO:0000318"/>
    <property type="project" value="GO_Central"/>
</dbReference>
<dbReference type="GO" id="GO:0000974">
    <property type="term" value="C:Prp19 complex"/>
    <property type="evidence" value="ECO:0000314"/>
    <property type="project" value="SGD"/>
</dbReference>
<dbReference type="GO" id="GO:0071006">
    <property type="term" value="C:U2-type catalytic step 1 spliceosome"/>
    <property type="evidence" value="ECO:0000314"/>
    <property type="project" value="SGD"/>
</dbReference>
<dbReference type="GO" id="GO:0071007">
    <property type="term" value="C:U2-type catalytic step 2 spliceosome"/>
    <property type="evidence" value="ECO:0000314"/>
    <property type="project" value="SGD"/>
</dbReference>
<dbReference type="GO" id="GO:0071008">
    <property type="term" value="C:U2-type post-mRNA release spliceosomal complex"/>
    <property type="evidence" value="ECO:0000314"/>
    <property type="project" value="SGD"/>
</dbReference>
<dbReference type="GO" id="GO:0071004">
    <property type="term" value="C:U2-type prespliceosome"/>
    <property type="evidence" value="ECO:0000314"/>
    <property type="project" value="SGD"/>
</dbReference>
<dbReference type="GO" id="GO:0003682">
    <property type="term" value="F:chromatin binding"/>
    <property type="evidence" value="ECO:0000314"/>
    <property type="project" value="SGD"/>
</dbReference>
<dbReference type="GO" id="GO:0003688">
    <property type="term" value="F:DNA replication origin binding"/>
    <property type="evidence" value="ECO:0000314"/>
    <property type="project" value="SGD"/>
</dbReference>
<dbReference type="GO" id="GO:0000354">
    <property type="term" value="P:cis assembly of pre-catalytic spliceosome"/>
    <property type="evidence" value="ECO:0000315"/>
    <property type="project" value="SGD"/>
</dbReference>
<dbReference type="GO" id="GO:0006270">
    <property type="term" value="P:DNA replication initiation"/>
    <property type="evidence" value="ECO:0000315"/>
    <property type="project" value="SGD"/>
</dbReference>
<dbReference type="GO" id="GO:0000398">
    <property type="term" value="P:mRNA splicing, via spliceosome"/>
    <property type="evidence" value="ECO:0000318"/>
    <property type="project" value="GO_Central"/>
</dbReference>
<dbReference type="GO" id="GO:0000245">
    <property type="term" value="P:spliceosomal complex assembly"/>
    <property type="evidence" value="ECO:0000318"/>
    <property type="project" value="GO_Central"/>
</dbReference>
<dbReference type="FunFam" id="1.25.40.10:FF:000639">
    <property type="entry name" value="Pre-mRNA-splicing factor CLF1"/>
    <property type="match status" value="1"/>
</dbReference>
<dbReference type="FunFam" id="1.25.40.10:FF:002542">
    <property type="entry name" value="Pre-mRNA-splicing factor CLF1"/>
    <property type="match status" value="1"/>
</dbReference>
<dbReference type="Gene3D" id="1.25.40.10">
    <property type="entry name" value="Tetratricopeptide repeat domain"/>
    <property type="match status" value="2"/>
</dbReference>
<dbReference type="InterPro" id="IPR003107">
    <property type="entry name" value="HAT"/>
</dbReference>
<dbReference type="InterPro" id="IPR055433">
    <property type="entry name" value="HAT_Syf1-like_N"/>
</dbReference>
<dbReference type="InterPro" id="IPR055430">
    <property type="entry name" value="HAT_Syf1_CNRKL1_C"/>
</dbReference>
<dbReference type="InterPro" id="IPR045075">
    <property type="entry name" value="Syf1-like"/>
</dbReference>
<dbReference type="InterPro" id="IPR011990">
    <property type="entry name" value="TPR-like_helical_dom_sf"/>
</dbReference>
<dbReference type="PANTHER" id="PTHR11246:SF3">
    <property type="entry name" value="CROOKED NECK-LIKE PROTEIN 1"/>
    <property type="match status" value="1"/>
</dbReference>
<dbReference type="PANTHER" id="PTHR11246">
    <property type="entry name" value="PRE-MRNA SPLICING FACTOR"/>
    <property type="match status" value="1"/>
</dbReference>
<dbReference type="Pfam" id="PF23231">
    <property type="entry name" value="HAT_Syf1_CNRKL1_C"/>
    <property type="match status" value="1"/>
</dbReference>
<dbReference type="Pfam" id="PF23233">
    <property type="entry name" value="HAT_Syf1_CNRKL1_N"/>
    <property type="match status" value="1"/>
</dbReference>
<dbReference type="SMART" id="SM00386">
    <property type="entry name" value="HAT"/>
    <property type="match status" value="12"/>
</dbReference>
<dbReference type="SUPFAM" id="SSF48452">
    <property type="entry name" value="TPR-like"/>
    <property type="match status" value="2"/>
</dbReference>
<feature type="chain" id="PRO_0000205753" description="Pre-mRNA-splicing factor CLF1">
    <location>
        <begin position="1"/>
        <end position="687"/>
    </location>
</feature>
<feature type="repeat" description="HAT 1">
    <location>
        <begin position="45"/>
        <end position="77"/>
    </location>
</feature>
<feature type="repeat" description="HAT 2">
    <location>
        <begin position="79"/>
        <end position="111"/>
    </location>
</feature>
<feature type="repeat" description="HAT 3">
    <location>
        <begin position="113"/>
        <end position="145"/>
    </location>
</feature>
<feature type="repeat" description="HAT 4">
    <location>
        <begin position="147"/>
        <end position="178"/>
    </location>
</feature>
<feature type="repeat" description="HAT 5">
    <location>
        <begin position="180"/>
        <end position="211"/>
    </location>
</feature>
<feature type="repeat" description="HAT 6">
    <location>
        <begin position="213"/>
        <end position="247"/>
    </location>
</feature>
<feature type="repeat" description="HAT 7">
    <location>
        <begin position="251"/>
        <end position="283"/>
    </location>
</feature>
<feature type="repeat" description="HAT 8">
    <location>
        <begin position="300"/>
        <end position="332"/>
    </location>
</feature>
<feature type="repeat" description="HAT 9">
    <location>
        <begin position="337"/>
        <end position="369"/>
    </location>
</feature>
<feature type="repeat" description="HAT 10">
    <location>
        <begin position="383"/>
        <end position="416"/>
    </location>
</feature>
<feature type="repeat" description="HAT 11">
    <location>
        <begin position="451"/>
        <end position="483"/>
    </location>
</feature>
<feature type="repeat" description="HAT 12">
    <location>
        <begin position="525"/>
        <end position="557"/>
    </location>
</feature>
<feature type="repeat" description="HAT 13">
    <location>
        <begin position="629"/>
        <end position="661"/>
    </location>
</feature>
<feature type="helix" evidence="13">
    <location>
        <begin position="15"/>
        <end position="26"/>
    </location>
</feature>
<feature type="helix" evidence="13">
    <location>
        <begin position="40"/>
        <end position="60"/>
    </location>
</feature>
<feature type="helix" evidence="13">
    <location>
        <begin position="65"/>
        <end position="77"/>
    </location>
</feature>
<feature type="helix" evidence="13">
    <location>
        <begin position="81"/>
        <end position="94"/>
    </location>
</feature>
<feature type="helix" evidence="13">
    <location>
        <begin position="99"/>
        <end position="111"/>
    </location>
</feature>
<feature type="helix" evidence="13">
    <location>
        <begin position="115"/>
        <end position="128"/>
    </location>
</feature>
<feature type="helix" evidence="13">
    <location>
        <begin position="133"/>
        <end position="145"/>
    </location>
</feature>
<feature type="helix" evidence="13">
    <location>
        <begin position="149"/>
        <end position="161"/>
    </location>
</feature>
<feature type="helix" evidence="13">
    <location>
        <begin position="166"/>
        <end position="178"/>
    </location>
</feature>
<feature type="helix" evidence="13">
    <location>
        <begin position="182"/>
        <end position="195"/>
    </location>
</feature>
<feature type="helix" evidence="13">
    <location>
        <begin position="199"/>
        <end position="212"/>
    </location>
</feature>
<feature type="helix" evidence="13">
    <location>
        <begin position="215"/>
        <end position="231"/>
    </location>
</feature>
<feature type="helix" evidence="13">
    <location>
        <begin position="232"/>
        <end position="235"/>
    </location>
</feature>
<feature type="helix" evidence="13">
    <location>
        <begin position="240"/>
        <end position="256"/>
    </location>
</feature>
<feature type="helix" evidence="13">
    <location>
        <begin position="260"/>
        <end position="273"/>
    </location>
</feature>
<feature type="helix" evidence="13">
    <location>
        <begin position="278"/>
        <end position="291"/>
    </location>
</feature>
<feature type="helix" evidence="13">
    <location>
        <begin position="297"/>
        <end position="315"/>
    </location>
</feature>
<feature type="helix" evidence="13">
    <location>
        <begin position="320"/>
        <end position="333"/>
    </location>
</feature>
<feature type="helix" evidence="13">
    <location>
        <begin position="335"/>
        <end position="337"/>
    </location>
</feature>
<feature type="helix" evidence="13">
    <location>
        <begin position="338"/>
        <end position="348"/>
    </location>
</feature>
<feature type="strand" evidence="13">
    <location>
        <begin position="352"/>
        <end position="355"/>
    </location>
</feature>
<feature type="helix" evidence="13">
    <location>
        <begin position="358"/>
        <end position="377"/>
    </location>
</feature>
<feature type="helix" evidence="13">
    <location>
        <begin position="381"/>
        <end position="394"/>
    </location>
</feature>
<feature type="turn" evidence="13">
    <location>
        <begin position="398"/>
        <end position="400"/>
    </location>
</feature>
<feature type="helix" evidence="13">
    <location>
        <begin position="404"/>
        <end position="416"/>
    </location>
</feature>
<feature type="helix" evidence="13">
    <location>
        <begin position="420"/>
        <end position="433"/>
    </location>
</feature>
<feature type="helix" evidence="13">
    <location>
        <begin position="437"/>
        <end position="450"/>
    </location>
</feature>
<feature type="helix" evidence="13">
    <location>
        <begin position="453"/>
        <end position="466"/>
    </location>
</feature>
<feature type="helix" evidence="13">
    <location>
        <begin position="471"/>
        <end position="484"/>
    </location>
</feature>
<feature type="helix" evidence="13">
    <location>
        <begin position="487"/>
        <end position="497"/>
    </location>
</feature>
<feature type="helix" evidence="13">
    <location>
        <begin position="500"/>
        <end position="502"/>
    </location>
</feature>
<feature type="helix" evidence="13">
    <location>
        <begin position="507"/>
        <end position="523"/>
    </location>
</feature>
<feature type="helix" evidence="13">
    <location>
        <begin position="527"/>
        <end position="540"/>
    </location>
</feature>
<feature type="turn" evidence="13">
    <location>
        <begin position="541"/>
        <end position="543"/>
    </location>
</feature>
<feature type="helix" evidence="13">
    <location>
        <begin position="545"/>
        <end position="557"/>
    </location>
</feature>
<feature type="helix" evidence="12">
    <location>
        <begin position="561"/>
        <end position="575"/>
    </location>
</feature>
<feature type="helix" evidence="13">
    <location>
        <begin position="586"/>
        <end position="605"/>
    </location>
</feature>
<feature type="helix" evidence="13">
    <location>
        <begin position="608"/>
        <end position="625"/>
    </location>
</feature>
<feature type="helix" evidence="13">
    <location>
        <begin position="628"/>
        <end position="637"/>
    </location>
</feature>
<keyword id="KW-0002">3D-structure</keyword>
<keyword id="KW-0903">Direct protein sequencing</keyword>
<keyword id="KW-0507">mRNA processing</keyword>
<keyword id="KW-0508">mRNA splicing</keyword>
<keyword id="KW-0539">Nucleus</keyword>
<keyword id="KW-1185">Reference proteome</keyword>
<keyword id="KW-0677">Repeat</keyword>
<keyword id="KW-0747">Spliceosome</keyword>
<name>CLF1_YEAST</name>
<proteinExistence type="evidence at protein level"/>
<reference key="1">
    <citation type="journal article" date="1997" name="Yeast">
        <title>Sequence analysis of a 37.6 kbp cosmid clone from the right arm of Saccharomyces cerevisiae chromosome XII, carrying YAP3, HOG1, SNR6, tRNA-Arg3 and 23 new open reading frames, among which several homologies to proteins involved in cell division control and to mammalian growth factors and other animal proteins are found.</title>
        <authorList>
            <person name="Verhasselt P."/>
            <person name="Volckaert G."/>
        </authorList>
    </citation>
    <scope>NUCLEOTIDE SEQUENCE [LARGE SCALE GENOMIC DNA]</scope>
    <source>
        <strain>ATCC 90840 / EAY235 / FY23</strain>
    </source>
</reference>
<reference key="2">
    <citation type="journal article" date="2014" name="G3 (Bethesda)">
        <title>The reference genome sequence of Saccharomyces cerevisiae: Then and now.</title>
        <authorList>
            <person name="Engel S.R."/>
            <person name="Dietrich F.S."/>
            <person name="Fisk D.G."/>
            <person name="Binkley G."/>
            <person name="Balakrishnan R."/>
            <person name="Costanzo M.C."/>
            <person name="Dwight S.S."/>
            <person name="Hitz B.C."/>
            <person name="Karra K."/>
            <person name="Nash R.S."/>
            <person name="Weng S."/>
            <person name="Wong E.D."/>
            <person name="Lloyd P."/>
            <person name="Skrzypek M.S."/>
            <person name="Miyasato S.R."/>
            <person name="Simison M."/>
            <person name="Cherry J.M."/>
        </authorList>
    </citation>
    <scope>GENOME REANNOTATION</scope>
    <source>
        <strain>ATCC 204508 / S288c</strain>
    </source>
</reference>
<reference key="3">
    <citation type="journal article" date="1997" name="Nature">
        <title>The nucleotide sequence of Saccharomyces cerevisiae chromosome XII.</title>
        <authorList>
            <person name="Johnston M."/>
            <person name="Hillier L.W."/>
            <person name="Riles L."/>
            <person name="Albermann K."/>
            <person name="Andre B."/>
            <person name="Ansorge W."/>
            <person name="Benes V."/>
            <person name="Brueckner M."/>
            <person name="Delius H."/>
            <person name="Dubois E."/>
            <person name="Duesterhoeft A."/>
            <person name="Entian K.-D."/>
            <person name="Floeth M."/>
            <person name="Goffeau A."/>
            <person name="Hebling U."/>
            <person name="Heumann K."/>
            <person name="Heuss-Neitzel D."/>
            <person name="Hilbert H."/>
            <person name="Hilger F."/>
            <person name="Kleine K."/>
            <person name="Koetter P."/>
            <person name="Louis E.J."/>
            <person name="Messenguy F."/>
            <person name="Mewes H.-W."/>
            <person name="Miosga T."/>
            <person name="Moestl D."/>
            <person name="Mueller-Auer S."/>
            <person name="Nentwich U."/>
            <person name="Obermaier B."/>
            <person name="Piravandi E."/>
            <person name="Pohl T.M."/>
            <person name="Portetelle D."/>
            <person name="Purnelle B."/>
            <person name="Rechmann S."/>
            <person name="Rieger M."/>
            <person name="Rinke M."/>
            <person name="Rose M."/>
            <person name="Scharfe M."/>
            <person name="Scherens B."/>
            <person name="Scholler P."/>
            <person name="Schwager C."/>
            <person name="Schwarz S."/>
            <person name="Underwood A.P."/>
            <person name="Urrestarazu L.A."/>
            <person name="Vandenbol M."/>
            <person name="Verhasselt P."/>
            <person name="Vierendeels F."/>
            <person name="Voet M."/>
            <person name="Volckaert G."/>
            <person name="Voss H."/>
            <person name="Wambutt R."/>
            <person name="Wedler E."/>
            <person name="Wedler H."/>
            <person name="Zimmermann F.K."/>
            <person name="Zollner A."/>
            <person name="Hani J."/>
            <person name="Hoheisel J.D."/>
        </authorList>
    </citation>
    <scope>NUCLEOTIDE SEQUENCE [LARGE SCALE GENOMIC DNA]</scope>
    <source>
        <strain>ATCC 204508 / S288c</strain>
    </source>
</reference>
<reference key="4">
    <citation type="journal article" date="2002" name="Nucleic Acids Res.">
        <title>Functional and physical interactions between components of the Prp19p-associated complex.</title>
        <authorList>
            <person name="Chen C.-H."/>
            <person name="Yu W.-C."/>
            <person name="Tsao T.Y."/>
            <person name="Wang L.-Y."/>
            <person name="Chen H.-R."/>
            <person name="Lin J.-Y."/>
            <person name="Tsai W.-Y."/>
            <person name="Cheng S.-C."/>
        </authorList>
    </citation>
    <scope>PROTEIN SEQUENCE OF 15-25</scope>
    <scope>IDENTIFICATION IN THE PRP19-ASSOCIATED COMPLEX</scope>
</reference>
<reference key="5">
    <citation type="journal article" date="1999" name="RNA">
        <title>Yeast ortholog of the Drosophila crooked neck protein promotes spliceosome assembly through stable U4/U6.U5 snRNP addition.</title>
        <authorList>
            <person name="Chung S."/>
            <person name="McLean M.R."/>
            <person name="Rymond B.C."/>
        </authorList>
    </citation>
    <scope>FUNCTION</scope>
    <scope>INTERACTION WITH MUD2 AND PRP40</scope>
</reference>
<reference key="6">
    <citation type="journal article" date="2000" name="Genetics">
        <title>Genetic and physical interactions between factors involved in both cell cycle progression and pre-mRNA splicing in Saccharomyces cerevisiae.</title>
        <authorList>
            <person name="Ben-Yehuda S."/>
            <person name="Dix I."/>
            <person name="Russell C.S."/>
            <person name="McGarvey M."/>
            <person name="Beggs J.D."/>
            <person name="Kupiec M."/>
        </authorList>
    </citation>
    <scope>FUNCTION</scope>
    <scope>INTERACTION WITH CEF1; ISY1; NTC20; PRP22 AND SYF2</scope>
</reference>
<reference key="7">
    <citation type="journal article" date="2000" name="RNA">
        <title>Functional analyses of interacting factors involved in both pre-mRNA splicing and cell cycle progression in Saccharomyces cerevisiae.</title>
        <authorList>
            <person name="Russell C.S."/>
            <person name="Ben-Yehuda S."/>
            <person name="Dix I."/>
            <person name="Kupiec M."/>
            <person name="Beggs J.D."/>
        </authorList>
    </citation>
    <scope>FUNCTION</scope>
    <scope>IDENTIFICATION IN THE SPLICEOSOME</scope>
</reference>
<reference key="8">
    <citation type="journal article" date="2002" name="Genetics">
        <title>Evidence that the pre-mRNA splicing factor Clf1p plays a role in DNA replication in Saccharomyces cerevisiae.</title>
        <authorList>
            <person name="Zhu W."/>
            <person name="Rainville I.R."/>
            <person name="Ding M."/>
            <person name="Bolus M."/>
            <person name="Heintz N.H."/>
            <person name="Pederson D.S."/>
        </authorList>
    </citation>
    <scope>FUNCTION</scope>
    <scope>INTERACTION WITH ORC2</scope>
</reference>
<reference key="9">
    <citation type="journal article" date="2002" name="Mol. Cell. Biol.">
        <title>Proteomics analysis reveals stable multiprotein complexes in both fission and budding yeasts containing Myb-related Cdc5p/Cef1p, novel pre-mRNA splicing factors, and snRNAs.</title>
        <authorList>
            <person name="Ohi M.D."/>
            <person name="Link A.J."/>
            <person name="Ren L."/>
            <person name="Jennings J.L."/>
            <person name="McDonald W.H."/>
            <person name="Gould K.L."/>
        </authorList>
    </citation>
    <scope>IDENTIFICATION IN THE CWC COMPLEX</scope>
    <scope>IDENTIFICATION BY MASS SPECTROMETRY</scope>
</reference>
<reference key="10">
    <citation type="journal article" date="2002" name="RNA">
        <title>Characterization of interactions among the Cef1p-Prp19p-associated splicing complex.</title>
        <authorList>
            <person name="Ohi M.D."/>
            <person name="Gould K.L."/>
        </authorList>
    </citation>
    <scope>INTERACTION WITH ISY1; NTC20; PRP46 AND SYF1</scope>
</reference>
<reference key="11">
    <citation type="journal article" date="2003" name="J. Biol. Chem.">
        <title>The Clf1p splicing factor promotes spliceosome assembly through N-terminal tetratricopeptide repeat contacts.</title>
        <authorList>
            <person name="Wang Q."/>
            <person name="Hobbs K."/>
            <person name="Lynn B."/>
            <person name="Rymond B.C."/>
        </authorList>
    </citation>
    <scope>FUNCTION</scope>
    <scope>IDENTIFICATION IN THE SPLICEOSOME</scope>
</reference>
<reference key="12">
    <citation type="journal article" date="2003" name="Mol. Cell">
        <title>Assigning function to yeast proteins by integration of technologies.</title>
        <authorList>
            <person name="Hazbun T.R."/>
            <person name="Malmstroem L."/>
            <person name="Anderson S."/>
            <person name="Graczyk B.J."/>
            <person name="Fox B."/>
            <person name="Riffle M."/>
            <person name="Sundin B.A."/>
            <person name="Aranda J.D."/>
            <person name="McDonald W.H."/>
            <person name="Chiu C.-H."/>
            <person name="Snydsman B.E."/>
            <person name="Bradley P."/>
            <person name="Muller E.G.D."/>
            <person name="Fields S."/>
            <person name="Baker D."/>
            <person name="Yates J.R. III"/>
            <person name="Davis T.N."/>
        </authorList>
    </citation>
    <scope>IDENTIFICATION BY MASS SPECTROMETRY</scope>
</reference>
<reference key="13">
    <citation type="journal article" date="2003" name="Nature">
        <title>Global analysis of protein localization in budding yeast.</title>
        <authorList>
            <person name="Huh W.-K."/>
            <person name="Falvo J.V."/>
            <person name="Gerke L.C."/>
            <person name="Carroll A.S."/>
            <person name="Howson R.W."/>
            <person name="Weissman J.S."/>
            <person name="O'Shea E.K."/>
        </authorList>
    </citation>
    <scope>SUBCELLULAR LOCATION [LARGE SCALE ANALYSIS]</scope>
</reference>
<reference key="14">
    <citation type="journal article" date="2003" name="Nature">
        <title>Global analysis of protein expression in yeast.</title>
        <authorList>
            <person name="Ghaemmaghami S."/>
            <person name="Huh W.-K."/>
            <person name="Bower K."/>
            <person name="Howson R.W."/>
            <person name="Belle A."/>
            <person name="Dephoure N."/>
            <person name="O'Shea E.K."/>
            <person name="Weissman J.S."/>
        </authorList>
    </citation>
    <scope>LEVEL OF PROTEIN EXPRESSION [LARGE SCALE ANALYSIS]</scope>
</reference>